<organismHost>
    <name type="scientific">Xanthomonas campestris pv. campestris</name>
    <dbReference type="NCBI Taxonomy" id="340"/>
</organismHost>
<accession>P68670</accession>
<accession>Q07482</accession>
<sequence>MARWCPPANRSASAAATCSSVVANTACMRWCKKRSQCPARRTP</sequence>
<evidence type="ECO:0000250" key="1"/>
<evidence type="ECO:0000255" key="2"/>
<evidence type="ECO:0000305" key="3"/>
<comment type="function">
    <text evidence="1">May initiate with G7P the virion concomitant assembly-budding process, by interacting with the packaging signal of the viral genome. The assembly-budding takes place at the host inner membrane. In turn, G7P and G9P are present at the end of the filamentous virion that emerges first from the bacterial host (By similarity).</text>
</comment>
<comment type="subcellular location">
    <subcellularLocation>
        <location evidence="3">Virion</location>
    </subcellularLocation>
    <subcellularLocation>
        <location evidence="3">Host membrane</location>
        <topology evidence="3">Single-pass membrane protein</topology>
    </subcellularLocation>
    <text evidence="1">Prior to assembly, is found associated with the bacterial host inner membrane. There are about five copies of this protein per mature phage that are located on the tail side of the filamentous virion with G7P (By similarity).</text>
</comment>
<comment type="similarity">
    <text evidence="3">Belongs to the inovirus G9P protein family.</text>
</comment>
<dbReference type="EMBL" id="X70331">
    <property type="protein sequence ID" value="CAA49797.1"/>
    <property type="molecule type" value="Genomic_DNA"/>
</dbReference>
<dbReference type="PIR" id="S33483">
    <property type="entry name" value="S33483"/>
</dbReference>
<dbReference type="Proteomes" id="UP000007611">
    <property type="component" value="Genome"/>
</dbReference>
<dbReference type="GO" id="GO:0033644">
    <property type="term" value="C:host cell membrane"/>
    <property type="evidence" value="ECO:0007669"/>
    <property type="project" value="UniProtKB-SubCell"/>
</dbReference>
<dbReference type="GO" id="GO:0016020">
    <property type="term" value="C:membrane"/>
    <property type="evidence" value="ECO:0007669"/>
    <property type="project" value="UniProtKB-KW"/>
</dbReference>
<dbReference type="GO" id="GO:0044423">
    <property type="term" value="C:virion component"/>
    <property type="evidence" value="ECO:0007669"/>
    <property type="project" value="UniProtKB-KW"/>
</dbReference>
<reference key="1">
    <citation type="journal article" date="1994" name="J. Gen. Virol.">
        <title>Nucleotide sequence determination, characterization and purification of the single-stranded DNA-binding protein and major coat protein of filamentous phage phi-Lf of Xanthomonas campestris pv. campestris.</title>
        <authorList>
            <person name="Wen F.-S."/>
            <person name="Tseng Y.-H."/>
        </authorList>
    </citation>
    <scope>NUCLEOTIDE SEQUENCE [GENOMIC DNA]</scope>
</reference>
<keyword id="KW-1043">Host membrane</keyword>
<keyword id="KW-0472">Membrane</keyword>
<keyword id="KW-1185">Reference proteome</keyword>
<keyword id="KW-0812">Transmembrane</keyword>
<keyword id="KW-1133">Transmembrane helix</keyword>
<keyword id="KW-0946">Virion</keyword>
<feature type="chain" id="PRO_0000098228" description="Tail virion protein G9P">
    <location>
        <begin position="1"/>
        <end position="43"/>
    </location>
</feature>
<feature type="transmembrane region" description="Helical" evidence="2">
    <location>
        <begin position="12"/>
        <end position="28"/>
    </location>
</feature>
<name>G9P_BPPHL</name>
<organism>
    <name type="scientific">Xanthomonas phage phiLf</name>
    <name type="common">Bacteriophage phi-Lf</name>
    <dbReference type="NCBI Taxonomy" id="28365"/>
    <lineage>
        <taxon>Viruses</taxon>
        <taxon>Monodnaviria</taxon>
        <taxon>Loebvirae</taxon>
        <taxon>Hofneiviricota</taxon>
        <taxon>Faserviricetes</taxon>
        <taxon>Tubulavirales</taxon>
        <taxon>Inoviridae</taxon>
    </lineage>
</organism>
<proteinExistence type="inferred from homology"/>
<protein>
    <recommendedName>
        <fullName>Tail virion protein G9P</fullName>
    </recommendedName>
    <alternativeName>
        <fullName>Coat protein C, polypeptide II</fullName>
    </alternativeName>
    <alternativeName>
        <fullName>G9P</fullName>
    </alternativeName>
</protein>
<gene>
    <name type="primary">IX</name>
</gene>